<feature type="chain" id="PRO_0000099321" description="Protein OPG162">
    <location>
        <begin position="1"/>
        <end position="168"/>
    </location>
</feature>
<feature type="topological domain" description="Intravirion" evidence="3">
    <location>
        <begin position="1"/>
        <end position="14"/>
    </location>
</feature>
<feature type="transmembrane region" description="Helical" evidence="3">
    <location>
        <begin position="15"/>
        <end position="37"/>
    </location>
</feature>
<feature type="topological domain" description="Virion surface" evidence="3">
    <location>
        <begin position="38"/>
        <end position="168"/>
    </location>
</feature>
<feature type="domain" description="C-type lectin">
    <location>
        <begin position="54"/>
        <end position="163"/>
    </location>
</feature>
<feature type="glycosylation site" description="N-linked (GlcNAc...) asparagine; by host" evidence="3">
    <location>
        <position position="133"/>
    </location>
</feature>
<feature type="disulfide bond" evidence="1">
    <location>
        <begin position="75"/>
        <end position="162"/>
    </location>
</feature>
<feature type="disulfide bond" evidence="1">
    <location>
        <begin position="141"/>
        <end position="154"/>
    </location>
</feature>
<keyword id="KW-1015">Disulfide bond</keyword>
<keyword id="KW-0325">Glycoprotein</keyword>
<keyword id="KW-1040">Host Golgi apparatus</keyword>
<keyword id="KW-0472">Membrane</keyword>
<keyword id="KW-1185">Reference proteome</keyword>
<keyword id="KW-0735">Signal-anchor</keyword>
<keyword id="KW-0812">Transmembrane</keyword>
<keyword id="KW-1133">Transmembrane helix</keyword>
<keyword id="KW-0946">Virion</keyword>
<reference key="1">
    <citation type="journal article" date="1991" name="Dokl. Akad. Nauk SSSR">
        <title>Creation of a clone library of fragments from the natural variola virus and study of the structural and functional organization of viral genes from a circle of hosts.</title>
        <authorList>
            <person name="Shchelkunov S.N."/>
            <person name="Marennikova S.S."/>
            <person name="Totmenin A.V."/>
            <person name="Blinov V.M."/>
            <person name="Chizhikov V.E."/>
            <person name="Gutorov V.V."/>
            <person name="Safronov P.F."/>
            <person name="Pozdnyakov S.G."/>
            <person name="Shelukhina E.M."/>
            <person name="Gashnikov P.V."/>
            <person name="Anjaparidze O.G."/>
            <person name="Sandakhchiev L.S."/>
        </authorList>
    </citation>
    <scope>NUCLEOTIDE SEQUENCE [GENOMIC DNA]</scope>
    <source>
        <strain>India-1967 / Isolate Ind3</strain>
    </source>
</reference>
<reference key="2">
    <citation type="journal article" date="1993" name="FEBS Lett.">
        <title>Genes of variola and vaccinia viruses necessary to overcome the host protective mechanisms.</title>
        <authorList>
            <person name="Shchelkunov S.N."/>
            <person name="Blinov V.M."/>
            <person name="Sandakhchiev L.S."/>
        </authorList>
    </citation>
    <scope>NUCLEOTIDE SEQUENCE [GENOMIC DNA]</scope>
    <source>
        <strain>India-1967 / Isolate Ind3</strain>
    </source>
</reference>
<gene>
    <name type="primary">OPG162</name>
    <name type="ORF">A34R</name>
    <name type="ORF">A37R</name>
</gene>
<name>PG162_VAR67</name>
<organism>
    <name type="scientific">Variola virus (isolate Human/India/Ind3/1967)</name>
    <name type="common">VARV</name>
    <name type="synonym">Smallpox virus</name>
    <dbReference type="NCBI Taxonomy" id="587200"/>
    <lineage>
        <taxon>Viruses</taxon>
        <taxon>Varidnaviria</taxon>
        <taxon>Bamfordvirae</taxon>
        <taxon>Nucleocytoviricota</taxon>
        <taxon>Pokkesviricetes</taxon>
        <taxon>Chitovirales</taxon>
        <taxon>Poxviridae</taxon>
        <taxon>Chordopoxvirinae</taxon>
        <taxon>Orthopoxvirus</taxon>
        <taxon>Variola virus</taxon>
    </lineage>
</organism>
<sequence>MKSLNRQTVSRFKKLSVPAAIMMILSTIISGIGTFLHYKEELMPSACANGWIQYDKHCYLDTNIKMSTDNTVYQCRKLRARLPRPDTRHLRVLFSIFYKDYWVSLKKTNNKWLDINNDKDIDISKLTNFKQLNSTTDAEACYIYKSGKLVKTVCKSTQSVLCVKRFYK</sequence>
<evidence type="ECO:0000250" key="1"/>
<evidence type="ECO:0000250" key="2">
    <source>
        <dbReference type="UniProtKB" id="P24761"/>
    </source>
</evidence>
<evidence type="ECO:0000255" key="3"/>
<evidence type="ECO:0000305" key="4"/>
<dbReference type="EMBL" id="X69198">
    <property type="protein sequence ID" value="CAA49082.1"/>
    <property type="molecule type" value="Genomic_DNA"/>
</dbReference>
<dbReference type="EMBL" id="X67115">
    <property type="protein sequence ID" value="CAA47508.1"/>
    <property type="molecule type" value="Genomic_DNA"/>
</dbReference>
<dbReference type="PIR" id="B36852">
    <property type="entry name" value="B36852"/>
</dbReference>
<dbReference type="RefSeq" id="NP_042185.1">
    <property type="nucleotide sequence ID" value="NC_001611.1"/>
</dbReference>
<dbReference type="SMR" id="P33851"/>
<dbReference type="GeneID" id="1486515"/>
<dbReference type="KEGG" id="vg:1486515"/>
<dbReference type="Proteomes" id="UP000002060">
    <property type="component" value="Segment"/>
</dbReference>
<dbReference type="GO" id="GO:0044177">
    <property type="term" value="C:host cell Golgi apparatus"/>
    <property type="evidence" value="ECO:0007669"/>
    <property type="project" value="UniProtKB-SubCell"/>
</dbReference>
<dbReference type="GO" id="GO:0016020">
    <property type="term" value="C:membrane"/>
    <property type="evidence" value="ECO:0007669"/>
    <property type="project" value="UniProtKB-KW"/>
</dbReference>
<dbReference type="GO" id="GO:0055036">
    <property type="term" value="C:virion membrane"/>
    <property type="evidence" value="ECO:0007669"/>
    <property type="project" value="UniProtKB-SubCell"/>
</dbReference>
<dbReference type="Gene3D" id="3.10.100.10">
    <property type="entry name" value="Mannose-Binding Protein A, subunit A"/>
    <property type="match status" value="1"/>
</dbReference>
<dbReference type="InterPro" id="IPR001304">
    <property type="entry name" value="C-type_lectin-like"/>
</dbReference>
<dbReference type="InterPro" id="IPR016186">
    <property type="entry name" value="C-type_lectin-like/link_sf"/>
</dbReference>
<dbReference type="InterPro" id="IPR016187">
    <property type="entry name" value="CTDL_fold"/>
</dbReference>
<dbReference type="Pfam" id="PF00059">
    <property type="entry name" value="Lectin_C"/>
    <property type="match status" value="1"/>
</dbReference>
<dbReference type="SUPFAM" id="SSF56436">
    <property type="entry name" value="C-type lectin-like"/>
    <property type="match status" value="1"/>
</dbReference>
<protein>
    <recommendedName>
        <fullName>Protein OPG162</fullName>
    </recommendedName>
</protein>
<accession>P33851</accession>
<proteinExistence type="inferred from homology"/>
<organismHost>
    <name type="scientific">Homo sapiens</name>
    <name type="common">Human</name>
    <dbReference type="NCBI Taxonomy" id="9606"/>
</organismHost>
<comment type="function">
    <text evidence="2">Forms a complex with OPG162 and OPG190 to coordinate the incorporation of OPG164 into wrapped enveloped virion (EV) membranes and, subsequently, the production of actin tails. Therefore plays an essential role in efficient cell-to-cell spread of viral particles.</text>
</comment>
<comment type="subunit">
    <text evidence="2">Interacts with protein OPG161. Interacts with protein OPG164. Interacts with protein OPG190.</text>
</comment>
<comment type="subcellular location">
    <subcellularLocation>
        <location evidence="2">Virion membrane</location>
        <topology evidence="2">Single-pass type II membrane protein</topology>
    </subcellularLocation>
    <subcellularLocation>
        <location evidence="2">Host Golgi apparatus</location>
    </subcellularLocation>
    <text evidence="2">Present in the enveloped virion (EV) membrane.</text>
</comment>
<comment type="similarity">
    <text evidence="4">Belongs to the orthopoxvirus OPG162 protein family.</text>
</comment>